<feature type="chain" id="PRO_0000301599" description="Aspartate carbamoyltransferase catalytic subunit">
    <location>
        <begin position="1"/>
        <end position="306"/>
    </location>
</feature>
<feature type="binding site" evidence="1">
    <location>
        <position position="51"/>
    </location>
    <ligand>
        <name>carbamoyl phosphate</name>
        <dbReference type="ChEBI" id="CHEBI:58228"/>
    </ligand>
</feature>
<feature type="binding site" evidence="1">
    <location>
        <position position="52"/>
    </location>
    <ligand>
        <name>carbamoyl phosphate</name>
        <dbReference type="ChEBI" id="CHEBI:58228"/>
    </ligand>
</feature>
<feature type="binding site" evidence="1">
    <location>
        <position position="80"/>
    </location>
    <ligand>
        <name>L-aspartate</name>
        <dbReference type="ChEBI" id="CHEBI:29991"/>
    </ligand>
</feature>
<feature type="binding site" evidence="1">
    <location>
        <position position="101"/>
    </location>
    <ligand>
        <name>carbamoyl phosphate</name>
        <dbReference type="ChEBI" id="CHEBI:58228"/>
    </ligand>
</feature>
<feature type="binding site" evidence="1">
    <location>
        <position position="129"/>
    </location>
    <ligand>
        <name>carbamoyl phosphate</name>
        <dbReference type="ChEBI" id="CHEBI:58228"/>
    </ligand>
</feature>
<feature type="binding site" evidence="1">
    <location>
        <position position="132"/>
    </location>
    <ligand>
        <name>carbamoyl phosphate</name>
        <dbReference type="ChEBI" id="CHEBI:58228"/>
    </ligand>
</feature>
<feature type="binding site" evidence="1">
    <location>
        <position position="162"/>
    </location>
    <ligand>
        <name>L-aspartate</name>
        <dbReference type="ChEBI" id="CHEBI:29991"/>
    </ligand>
</feature>
<feature type="binding site" evidence="1">
    <location>
        <position position="224"/>
    </location>
    <ligand>
        <name>L-aspartate</name>
        <dbReference type="ChEBI" id="CHEBI:29991"/>
    </ligand>
</feature>
<feature type="binding site" evidence="1">
    <location>
        <position position="263"/>
    </location>
    <ligand>
        <name>carbamoyl phosphate</name>
        <dbReference type="ChEBI" id="CHEBI:58228"/>
    </ligand>
</feature>
<feature type="binding site" evidence="1">
    <location>
        <position position="264"/>
    </location>
    <ligand>
        <name>carbamoyl phosphate</name>
        <dbReference type="ChEBI" id="CHEBI:58228"/>
    </ligand>
</feature>
<evidence type="ECO:0000255" key="1">
    <source>
        <dbReference type="HAMAP-Rule" id="MF_00001"/>
    </source>
</evidence>
<gene>
    <name evidence="1" type="primary">pyrB</name>
    <name type="ordered locus">BDI_0841</name>
</gene>
<proteinExistence type="inferred from homology"/>
<dbReference type="EC" id="2.1.3.2" evidence="1"/>
<dbReference type="EMBL" id="CP000140">
    <property type="protein sequence ID" value="ABR42611.1"/>
    <property type="molecule type" value="Genomic_DNA"/>
</dbReference>
<dbReference type="RefSeq" id="WP_005857322.1">
    <property type="nucleotide sequence ID" value="NZ_LR215978.1"/>
</dbReference>
<dbReference type="SMR" id="A6LA97"/>
<dbReference type="STRING" id="435591.BDI_0841"/>
<dbReference type="PaxDb" id="435591-BDI_0841"/>
<dbReference type="GeneID" id="93525869"/>
<dbReference type="KEGG" id="pdi:BDI_0841"/>
<dbReference type="eggNOG" id="COG0540">
    <property type="taxonomic scope" value="Bacteria"/>
</dbReference>
<dbReference type="HOGENOM" id="CLU_043846_1_2_10"/>
<dbReference type="BioCyc" id="PDIS435591:G1G5A-861-MONOMER"/>
<dbReference type="UniPathway" id="UPA00070">
    <property type="reaction ID" value="UER00116"/>
</dbReference>
<dbReference type="Proteomes" id="UP000000566">
    <property type="component" value="Chromosome"/>
</dbReference>
<dbReference type="GO" id="GO:0005829">
    <property type="term" value="C:cytosol"/>
    <property type="evidence" value="ECO:0007669"/>
    <property type="project" value="TreeGrafter"/>
</dbReference>
<dbReference type="GO" id="GO:0016597">
    <property type="term" value="F:amino acid binding"/>
    <property type="evidence" value="ECO:0007669"/>
    <property type="project" value="InterPro"/>
</dbReference>
<dbReference type="GO" id="GO:0004070">
    <property type="term" value="F:aspartate carbamoyltransferase activity"/>
    <property type="evidence" value="ECO:0007669"/>
    <property type="project" value="UniProtKB-UniRule"/>
</dbReference>
<dbReference type="GO" id="GO:0006207">
    <property type="term" value="P:'de novo' pyrimidine nucleobase biosynthetic process"/>
    <property type="evidence" value="ECO:0007669"/>
    <property type="project" value="InterPro"/>
</dbReference>
<dbReference type="GO" id="GO:0044205">
    <property type="term" value="P:'de novo' UMP biosynthetic process"/>
    <property type="evidence" value="ECO:0007669"/>
    <property type="project" value="UniProtKB-UniRule"/>
</dbReference>
<dbReference type="GO" id="GO:0006520">
    <property type="term" value="P:amino acid metabolic process"/>
    <property type="evidence" value="ECO:0007669"/>
    <property type="project" value="InterPro"/>
</dbReference>
<dbReference type="FunFam" id="3.40.50.1370:FF:000001">
    <property type="entry name" value="Aspartate carbamoyltransferase"/>
    <property type="match status" value="1"/>
</dbReference>
<dbReference type="FunFam" id="3.40.50.1370:FF:000002">
    <property type="entry name" value="Aspartate carbamoyltransferase 2"/>
    <property type="match status" value="1"/>
</dbReference>
<dbReference type="Gene3D" id="3.40.50.1370">
    <property type="entry name" value="Aspartate/ornithine carbamoyltransferase"/>
    <property type="match status" value="2"/>
</dbReference>
<dbReference type="HAMAP" id="MF_00001">
    <property type="entry name" value="Asp_carb_tr"/>
    <property type="match status" value="1"/>
</dbReference>
<dbReference type="InterPro" id="IPR006132">
    <property type="entry name" value="Asp/Orn_carbamoyltranf_P-bd"/>
</dbReference>
<dbReference type="InterPro" id="IPR006130">
    <property type="entry name" value="Asp/Orn_carbamoylTrfase"/>
</dbReference>
<dbReference type="InterPro" id="IPR036901">
    <property type="entry name" value="Asp/Orn_carbamoylTrfase_sf"/>
</dbReference>
<dbReference type="InterPro" id="IPR002082">
    <property type="entry name" value="Asp_carbamoyltransf"/>
</dbReference>
<dbReference type="InterPro" id="IPR006131">
    <property type="entry name" value="Asp_carbamoyltransf_Asp/Orn-bd"/>
</dbReference>
<dbReference type="NCBIfam" id="TIGR00670">
    <property type="entry name" value="asp_carb_tr"/>
    <property type="match status" value="1"/>
</dbReference>
<dbReference type="NCBIfam" id="NF002032">
    <property type="entry name" value="PRK00856.1"/>
    <property type="match status" value="1"/>
</dbReference>
<dbReference type="PANTHER" id="PTHR45753:SF6">
    <property type="entry name" value="ASPARTATE CARBAMOYLTRANSFERASE"/>
    <property type="match status" value="1"/>
</dbReference>
<dbReference type="PANTHER" id="PTHR45753">
    <property type="entry name" value="ORNITHINE CARBAMOYLTRANSFERASE, MITOCHONDRIAL"/>
    <property type="match status" value="1"/>
</dbReference>
<dbReference type="Pfam" id="PF00185">
    <property type="entry name" value="OTCace"/>
    <property type="match status" value="1"/>
</dbReference>
<dbReference type="Pfam" id="PF02729">
    <property type="entry name" value="OTCace_N"/>
    <property type="match status" value="1"/>
</dbReference>
<dbReference type="PRINTS" id="PR00100">
    <property type="entry name" value="AOTCASE"/>
</dbReference>
<dbReference type="PRINTS" id="PR00101">
    <property type="entry name" value="ATCASE"/>
</dbReference>
<dbReference type="SUPFAM" id="SSF53671">
    <property type="entry name" value="Aspartate/ornithine carbamoyltransferase"/>
    <property type="match status" value="1"/>
</dbReference>
<dbReference type="PROSITE" id="PS00097">
    <property type="entry name" value="CARBAMOYLTRANSFERASE"/>
    <property type="match status" value="1"/>
</dbReference>
<sequence>MKSKSLVSIDQCSKEDILRILDNARKFEENPNRKLLEGKVAATLFFEPSTRTRLSFETAVNRLGGRVIGFSDASTTSSSKGETLKDTILMVSNYVDLIIMRHHLEGAARYASEVTDVPIINAGDGANQHPSQTMLDLYSIRKTQGKLDNLTITMVGDLKYGRTVHSLIVGMSHFHPTFHFVAPNELRMPDEQKNFCDKHGLKYEEHTDFTEDIINQTDILYMTRVQRERFTDLEEYERVKNVYILRNDMLRNSRENLRILHPLPRVNEIAYDVDDNPKAYYIQQARNGLFARQAIICEVLGISIDE</sequence>
<reference key="1">
    <citation type="journal article" date="2007" name="PLoS Biol.">
        <title>Evolution of symbiotic bacteria in the distal human intestine.</title>
        <authorList>
            <person name="Xu J."/>
            <person name="Mahowald M.A."/>
            <person name="Ley R.E."/>
            <person name="Lozupone C.A."/>
            <person name="Hamady M."/>
            <person name="Martens E.C."/>
            <person name="Henrissat B."/>
            <person name="Coutinho P.M."/>
            <person name="Minx P."/>
            <person name="Latreille P."/>
            <person name="Cordum H."/>
            <person name="Van Brunt A."/>
            <person name="Kim K."/>
            <person name="Fulton R.S."/>
            <person name="Fulton L.A."/>
            <person name="Clifton S.W."/>
            <person name="Wilson R.K."/>
            <person name="Knight R.D."/>
            <person name="Gordon J.I."/>
        </authorList>
    </citation>
    <scope>NUCLEOTIDE SEQUENCE [LARGE SCALE GENOMIC DNA]</scope>
    <source>
        <strain>ATCC 8503 / DSM 20701 / CIP 104284 / JCM 5825 / NCTC 11152</strain>
    </source>
</reference>
<organism>
    <name type="scientific">Parabacteroides distasonis (strain ATCC 8503 / DSM 20701 / CIP 104284 / JCM 5825 / NCTC 11152)</name>
    <dbReference type="NCBI Taxonomy" id="435591"/>
    <lineage>
        <taxon>Bacteria</taxon>
        <taxon>Pseudomonadati</taxon>
        <taxon>Bacteroidota</taxon>
        <taxon>Bacteroidia</taxon>
        <taxon>Bacteroidales</taxon>
        <taxon>Tannerellaceae</taxon>
        <taxon>Parabacteroides</taxon>
    </lineage>
</organism>
<protein>
    <recommendedName>
        <fullName evidence="1">Aspartate carbamoyltransferase catalytic subunit</fullName>
        <ecNumber evidence="1">2.1.3.2</ecNumber>
    </recommendedName>
    <alternativeName>
        <fullName evidence="1">Aspartate transcarbamylase</fullName>
        <shortName evidence="1">ATCase</shortName>
    </alternativeName>
</protein>
<name>PYRB_PARD8</name>
<keyword id="KW-0665">Pyrimidine biosynthesis</keyword>
<keyword id="KW-1185">Reference proteome</keyword>
<keyword id="KW-0808">Transferase</keyword>
<accession>A6LA97</accession>
<comment type="function">
    <text evidence="1">Catalyzes the condensation of carbamoyl phosphate and aspartate to form carbamoyl aspartate and inorganic phosphate, the committed step in the de novo pyrimidine nucleotide biosynthesis pathway.</text>
</comment>
<comment type="catalytic activity">
    <reaction evidence="1">
        <text>carbamoyl phosphate + L-aspartate = N-carbamoyl-L-aspartate + phosphate + H(+)</text>
        <dbReference type="Rhea" id="RHEA:20013"/>
        <dbReference type="ChEBI" id="CHEBI:15378"/>
        <dbReference type="ChEBI" id="CHEBI:29991"/>
        <dbReference type="ChEBI" id="CHEBI:32814"/>
        <dbReference type="ChEBI" id="CHEBI:43474"/>
        <dbReference type="ChEBI" id="CHEBI:58228"/>
        <dbReference type="EC" id="2.1.3.2"/>
    </reaction>
</comment>
<comment type="pathway">
    <text evidence="1">Pyrimidine metabolism; UMP biosynthesis via de novo pathway; (S)-dihydroorotate from bicarbonate: step 2/3.</text>
</comment>
<comment type="subunit">
    <text evidence="1">Heterododecamer (2C3:3R2) of six catalytic PyrB chains organized as two trimers (C3), and six regulatory PyrI chains organized as three dimers (R2).</text>
</comment>
<comment type="similarity">
    <text evidence="1">Belongs to the aspartate/ornithine carbamoyltransferase superfamily. ATCase family.</text>
</comment>